<accession>Q3SYB3</accession>
<accession>B2RPC4</accession>
<accession>Q4V336</accession>
<evidence type="ECO:0000255" key="1">
    <source>
        <dbReference type="PROSITE-ProRule" id="PRU00089"/>
    </source>
</evidence>
<evidence type="ECO:0000256" key="2">
    <source>
        <dbReference type="SAM" id="MobiDB-lite"/>
    </source>
</evidence>
<feature type="chain" id="PRO_0000301979" description="Forkhead box protein D4-like 6">
    <location>
        <begin position="1"/>
        <end position="417"/>
    </location>
</feature>
<feature type="DNA-binding region" description="Fork-head" evidence="1">
    <location>
        <begin position="108"/>
        <end position="202"/>
    </location>
</feature>
<feature type="region of interest" description="Disordered" evidence="2">
    <location>
        <begin position="1"/>
        <end position="50"/>
    </location>
</feature>
<feature type="region of interest" description="Disordered" evidence="2">
    <location>
        <begin position="70"/>
        <end position="105"/>
    </location>
</feature>
<feature type="compositionally biased region" description="Basic and acidic residues" evidence="2">
    <location>
        <begin position="1"/>
        <end position="29"/>
    </location>
</feature>
<feature type="compositionally biased region" description="Acidic residues" evidence="2">
    <location>
        <begin position="30"/>
        <end position="45"/>
    </location>
</feature>
<gene>
    <name type="primary">FOXD4L6</name>
</gene>
<comment type="interaction">
    <interactant intactId="EBI-6425864">
        <id>Q3SYB3</id>
    </interactant>
    <interactant intactId="EBI-1222467">
        <id>P02649</id>
        <label>APOE</label>
    </interactant>
    <organismsDiffer>false</organismsDiffer>
    <experiments>3</experiments>
</comment>
<comment type="interaction">
    <interactant intactId="EBI-6425864">
        <id>Q3SYB3</id>
    </interactant>
    <interactant intactId="EBI-9056613">
        <id>P78540</id>
        <label>ARG2</label>
    </interactant>
    <organismsDiffer>false</organismsDiffer>
    <experiments>3</experiments>
</comment>
<comment type="interaction">
    <interactant intactId="EBI-6425864">
        <id>Q3SYB3</id>
    </interactant>
    <interactant intactId="EBI-946046">
        <id>P54252</id>
        <label>ATXN3</label>
    </interactant>
    <organismsDiffer>false</organismsDiffer>
    <experiments>3</experiments>
</comment>
<comment type="interaction">
    <interactant intactId="EBI-6425864">
        <id>Q3SYB3</id>
    </interactant>
    <interactant intactId="EBI-446479">
        <id>P99999</id>
        <label>CYCS</label>
    </interactant>
    <organismsDiffer>false</organismsDiffer>
    <experiments>3</experiments>
</comment>
<comment type="interaction">
    <interactant intactId="EBI-6425864">
        <id>Q3SYB3</id>
    </interactant>
    <interactant intactId="EBI-715104">
        <id>Q9NX09</id>
        <label>DDIT4</label>
    </interactant>
    <organismsDiffer>false</organismsDiffer>
    <experiments>3</experiments>
</comment>
<comment type="interaction">
    <interactant intactId="EBI-6425864">
        <id>Q3SYB3</id>
    </interactant>
    <interactant intactId="EBI-21603100">
        <id>P26378-2</id>
        <label>ELAVL4</label>
    </interactant>
    <organismsDiffer>false</organismsDiffer>
    <experiments>3</experiments>
</comment>
<comment type="interaction">
    <interactant intactId="EBI-6425864">
        <id>Q3SYB3</id>
    </interactant>
    <interactant intactId="EBI-466029">
        <id>P42858</id>
        <label>HTT</label>
    </interactant>
    <organismsDiffer>false</organismsDiffer>
    <experiments>6</experiments>
</comment>
<comment type="interaction">
    <interactant intactId="EBI-6425864">
        <id>Q3SYB3</id>
    </interactant>
    <interactant intactId="EBI-300173">
        <id>P05107</id>
        <label>ITGB2</label>
    </interactant>
    <organismsDiffer>false</organismsDiffer>
    <experiments>3</experiments>
</comment>
<comment type="interaction">
    <interactant intactId="EBI-6425864">
        <id>Q3SYB3</id>
    </interactant>
    <interactant intactId="EBI-21591415">
        <id>P13473-2</id>
        <label>LAMP2</label>
    </interactant>
    <organismsDiffer>false</organismsDiffer>
    <experiments>3</experiments>
</comment>
<comment type="interaction">
    <interactant intactId="EBI-6425864">
        <id>Q3SYB3</id>
    </interactant>
    <interactant intactId="EBI-473196">
        <id>Q5T3J3</id>
        <label>LRIF1</label>
    </interactant>
    <organismsDiffer>false</organismsDiffer>
    <experiments>3</experiments>
</comment>
<comment type="interaction">
    <interactant intactId="EBI-6425864">
        <id>Q3SYB3</id>
    </interactant>
    <interactant intactId="EBI-724076">
        <id>Q99750</id>
        <label>MDFI</label>
    </interactant>
    <organismsDiffer>false</organismsDiffer>
    <experiments>6</experiments>
</comment>
<comment type="interaction">
    <interactant intactId="EBI-6425864">
        <id>Q3SYB3</id>
    </interactant>
    <interactant intactId="EBI-716486">
        <id>Q92597</id>
        <label>NDRG1</label>
    </interactant>
    <organismsDiffer>false</organismsDiffer>
    <experiments>3</experiments>
</comment>
<comment type="interaction">
    <interactant intactId="EBI-6425864">
        <id>Q3SYB3</id>
    </interactant>
    <interactant intactId="EBI-999394">
        <id>P00747</id>
        <label>PLG</label>
    </interactant>
    <organismsDiffer>false</organismsDiffer>
    <experiments>3</experiments>
</comment>
<comment type="interaction">
    <interactant intactId="EBI-6425864">
        <id>Q3SYB3</id>
    </interactant>
    <interactant intactId="EBI-2010251">
        <id>P49810</id>
        <label>PSEN2</label>
    </interactant>
    <organismsDiffer>false</organismsDiffer>
    <experiments>3</experiments>
</comment>
<comment type="interaction">
    <interactant intactId="EBI-6425864">
        <id>Q3SYB3</id>
    </interactant>
    <interactant intactId="EBI-12952093">
        <id>Q6NZ63</id>
        <label>STEAP1B</label>
    </interactant>
    <organismsDiffer>false</organismsDiffer>
    <experiments>3</experiments>
</comment>
<comment type="interaction">
    <interactant intactId="EBI-6425864">
        <id>Q3SYB3</id>
    </interactant>
    <interactant intactId="EBI-1054052">
        <id>P31948</id>
        <label>STIP1</label>
    </interactant>
    <organismsDiffer>false</organismsDiffer>
    <experiments>3</experiments>
</comment>
<comment type="interaction">
    <interactant intactId="EBI-6425864">
        <id>Q3SYB3</id>
    </interactant>
    <interactant intactId="EBI-1056653">
        <id>Q92956</id>
        <label>TNFRSF14</label>
    </interactant>
    <organismsDiffer>false</organismsDiffer>
    <experiments>3</experiments>
</comment>
<comment type="interaction">
    <interactant intactId="EBI-6425864">
        <id>Q3SYB3</id>
    </interactant>
    <interactant intactId="EBI-25872486">
        <id>Q96BH6</id>
    </interactant>
    <organismsDiffer>false</organismsDiffer>
    <experiments>3</experiments>
</comment>
<comment type="subcellular location">
    <subcellularLocation>
        <location evidence="1">Nucleus</location>
    </subcellularLocation>
</comment>
<dbReference type="EMBL" id="BX255923">
    <property type="status" value="NOT_ANNOTATED_CDS"/>
    <property type="molecule type" value="Genomic_DNA"/>
</dbReference>
<dbReference type="EMBL" id="BC103887">
    <property type="protein sequence ID" value="AAI03888.1"/>
    <property type="molecule type" value="mRNA"/>
</dbReference>
<dbReference type="EMBL" id="BC137365">
    <property type="protein sequence ID" value="AAI37366.1"/>
    <property type="molecule type" value="mRNA"/>
</dbReference>
<dbReference type="EMBL" id="BC137366">
    <property type="protein sequence ID" value="AAI37367.1"/>
    <property type="molecule type" value="mRNA"/>
</dbReference>
<dbReference type="CCDS" id="CCDS43826.1"/>
<dbReference type="RefSeq" id="NP_001078945.1">
    <property type="nucleotide sequence ID" value="NM_001085476.4"/>
</dbReference>
<dbReference type="SMR" id="Q3SYB3"/>
<dbReference type="BioGRID" id="575756">
    <property type="interactions" value="50"/>
</dbReference>
<dbReference type="FunCoup" id="Q3SYB3">
    <property type="interactions" value="19"/>
</dbReference>
<dbReference type="IntAct" id="Q3SYB3">
    <property type="interactions" value="71"/>
</dbReference>
<dbReference type="STRING" id="9606.ENSP00000484875"/>
<dbReference type="GlyGen" id="Q3SYB3">
    <property type="glycosylation" value="1 site"/>
</dbReference>
<dbReference type="iPTMnet" id="Q3SYB3"/>
<dbReference type="PhosphoSitePlus" id="Q3SYB3"/>
<dbReference type="BioMuta" id="FOXD4L6"/>
<dbReference type="DMDM" id="166214939"/>
<dbReference type="jPOST" id="Q3SYB3"/>
<dbReference type="MassIVE" id="Q3SYB3"/>
<dbReference type="PaxDb" id="9606-ENSP00000484875"/>
<dbReference type="PeptideAtlas" id="Q3SYB3"/>
<dbReference type="Antibodypedia" id="73303">
    <property type="antibodies" value="15 antibodies from 10 providers"/>
</dbReference>
<dbReference type="DNASU" id="653404"/>
<dbReference type="Ensembl" id="ENST00000622588.2">
    <property type="protein sequence ID" value="ENSP00000484875.1"/>
    <property type="gene ID" value="ENSG00000273514.2"/>
</dbReference>
<dbReference type="GeneID" id="653404"/>
<dbReference type="KEGG" id="hsa:653404"/>
<dbReference type="MANE-Select" id="ENST00000622588.2">
    <property type="protein sequence ID" value="ENSP00000484875.1"/>
    <property type="RefSeq nucleotide sequence ID" value="NM_001085476.4"/>
    <property type="RefSeq protein sequence ID" value="NP_001078945.1"/>
</dbReference>
<dbReference type="UCSC" id="uc004afi.3">
    <property type="organism name" value="human"/>
</dbReference>
<dbReference type="AGR" id="HGNC:31986"/>
<dbReference type="CTD" id="653404"/>
<dbReference type="DisGeNET" id="653404"/>
<dbReference type="GeneCards" id="FOXD4L6"/>
<dbReference type="HGNC" id="HGNC:31986">
    <property type="gene designation" value="FOXD4L6"/>
</dbReference>
<dbReference type="HPA" id="ENSG00000273514">
    <property type="expression patterns" value="Tissue enhanced (brain)"/>
</dbReference>
<dbReference type="neXtProt" id="NX_Q3SYB3"/>
<dbReference type="OpenTargets" id="ENSG00000273514"/>
<dbReference type="PharmGKB" id="PA162388805"/>
<dbReference type="VEuPathDB" id="HostDB:ENSG00000273514"/>
<dbReference type="eggNOG" id="KOG2294">
    <property type="taxonomic scope" value="Eukaryota"/>
</dbReference>
<dbReference type="GeneTree" id="ENSGT00940000163353"/>
<dbReference type="HOGENOM" id="CLU_040357_3_1_1"/>
<dbReference type="InParanoid" id="Q3SYB3"/>
<dbReference type="OMA" id="FKRHHPP"/>
<dbReference type="OrthoDB" id="9537367at2759"/>
<dbReference type="PAN-GO" id="Q3SYB3">
    <property type="GO annotations" value="5 GO annotations based on evolutionary models"/>
</dbReference>
<dbReference type="PhylomeDB" id="Q3SYB3"/>
<dbReference type="TreeFam" id="TF316127"/>
<dbReference type="PathwayCommons" id="Q3SYB3"/>
<dbReference type="SignaLink" id="Q3SYB3"/>
<dbReference type="BioGRID-ORCS" id="653404">
    <property type="hits" value="201 hits in 631 CRISPR screens"/>
</dbReference>
<dbReference type="GenomeRNAi" id="653404"/>
<dbReference type="Pharos" id="Q3SYB3">
    <property type="development level" value="Tdark"/>
</dbReference>
<dbReference type="PRO" id="PR:Q3SYB3"/>
<dbReference type="Proteomes" id="UP000005640">
    <property type="component" value="Chromosome 9"/>
</dbReference>
<dbReference type="RNAct" id="Q3SYB3">
    <property type="molecule type" value="protein"/>
</dbReference>
<dbReference type="Bgee" id="ENSG00000273514">
    <property type="expression patterns" value="Expressed in right uterine tube and 31 other cell types or tissues"/>
</dbReference>
<dbReference type="GO" id="GO:0000785">
    <property type="term" value="C:chromatin"/>
    <property type="evidence" value="ECO:0000247"/>
    <property type="project" value="NTNU_SB"/>
</dbReference>
<dbReference type="GO" id="GO:0005634">
    <property type="term" value="C:nucleus"/>
    <property type="evidence" value="ECO:0007669"/>
    <property type="project" value="UniProtKB-SubCell"/>
</dbReference>
<dbReference type="GO" id="GO:0000981">
    <property type="term" value="F:DNA-binding transcription factor activity, RNA polymerase II-specific"/>
    <property type="evidence" value="ECO:0000247"/>
    <property type="project" value="NTNU_SB"/>
</dbReference>
<dbReference type="GO" id="GO:0000978">
    <property type="term" value="F:RNA polymerase II cis-regulatory region sequence-specific DNA binding"/>
    <property type="evidence" value="ECO:0000318"/>
    <property type="project" value="GO_Central"/>
</dbReference>
<dbReference type="GO" id="GO:0009653">
    <property type="term" value="P:anatomical structure morphogenesis"/>
    <property type="evidence" value="ECO:0000318"/>
    <property type="project" value="GO_Central"/>
</dbReference>
<dbReference type="GO" id="GO:0030154">
    <property type="term" value="P:cell differentiation"/>
    <property type="evidence" value="ECO:0000318"/>
    <property type="project" value="GO_Central"/>
</dbReference>
<dbReference type="GO" id="GO:0006357">
    <property type="term" value="P:regulation of transcription by RNA polymerase II"/>
    <property type="evidence" value="ECO:0000318"/>
    <property type="project" value="GO_Central"/>
</dbReference>
<dbReference type="CDD" id="cd20048">
    <property type="entry name" value="FH_FOXD4-like"/>
    <property type="match status" value="1"/>
</dbReference>
<dbReference type="FunFam" id="1.10.10.10:FF:000071">
    <property type="entry name" value="Forkhead box F1"/>
    <property type="match status" value="1"/>
</dbReference>
<dbReference type="Gene3D" id="1.10.10.10">
    <property type="entry name" value="Winged helix-like DNA-binding domain superfamily/Winged helix DNA-binding domain"/>
    <property type="match status" value="1"/>
</dbReference>
<dbReference type="InterPro" id="IPR001766">
    <property type="entry name" value="Fork_head_dom"/>
</dbReference>
<dbReference type="InterPro" id="IPR050211">
    <property type="entry name" value="FOX_domain-containing"/>
</dbReference>
<dbReference type="InterPro" id="IPR018122">
    <property type="entry name" value="TF_fork_head_CS_1"/>
</dbReference>
<dbReference type="InterPro" id="IPR030456">
    <property type="entry name" value="TF_fork_head_CS_2"/>
</dbReference>
<dbReference type="InterPro" id="IPR036388">
    <property type="entry name" value="WH-like_DNA-bd_sf"/>
</dbReference>
<dbReference type="InterPro" id="IPR036390">
    <property type="entry name" value="WH_DNA-bd_sf"/>
</dbReference>
<dbReference type="PANTHER" id="PTHR11829">
    <property type="entry name" value="FORKHEAD BOX PROTEIN"/>
    <property type="match status" value="1"/>
</dbReference>
<dbReference type="PANTHER" id="PTHR11829:SF404">
    <property type="entry name" value="FORKHEAD BOX PROTEIN D4"/>
    <property type="match status" value="1"/>
</dbReference>
<dbReference type="Pfam" id="PF00250">
    <property type="entry name" value="Forkhead"/>
    <property type="match status" value="1"/>
</dbReference>
<dbReference type="PRINTS" id="PR00053">
    <property type="entry name" value="FORKHEAD"/>
</dbReference>
<dbReference type="SMART" id="SM00339">
    <property type="entry name" value="FH"/>
    <property type="match status" value="1"/>
</dbReference>
<dbReference type="SUPFAM" id="SSF46785">
    <property type="entry name" value="Winged helix' DNA-binding domain"/>
    <property type="match status" value="1"/>
</dbReference>
<dbReference type="PROSITE" id="PS00657">
    <property type="entry name" value="FORK_HEAD_1"/>
    <property type="match status" value="1"/>
</dbReference>
<dbReference type="PROSITE" id="PS00658">
    <property type="entry name" value="FORK_HEAD_2"/>
    <property type="match status" value="1"/>
</dbReference>
<dbReference type="PROSITE" id="PS50039">
    <property type="entry name" value="FORK_HEAD_3"/>
    <property type="match status" value="1"/>
</dbReference>
<reference key="1">
    <citation type="journal article" date="2004" name="Nature">
        <title>DNA sequence and analysis of human chromosome 9.</title>
        <authorList>
            <person name="Humphray S.J."/>
            <person name="Oliver K."/>
            <person name="Hunt A.R."/>
            <person name="Plumb R.W."/>
            <person name="Loveland J.E."/>
            <person name="Howe K.L."/>
            <person name="Andrews T.D."/>
            <person name="Searle S."/>
            <person name="Hunt S.E."/>
            <person name="Scott C.E."/>
            <person name="Jones M.C."/>
            <person name="Ainscough R."/>
            <person name="Almeida J.P."/>
            <person name="Ambrose K.D."/>
            <person name="Ashwell R.I.S."/>
            <person name="Babbage A.K."/>
            <person name="Babbage S."/>
            <person name="Bagguley C.L."/>
            <person name="Bailey J."/>
            <person name="Banerjee R."/>
            <person name="Barker D.J."/>
            <person name="Barlow K.F."/>
            <person name="Bates K."/>
            <person name="Beasley H."/>
            <person name="Beasley O."/>
            <person name="Bird C.P."/>
            <person name="Bray-Allen S."/>
            <person name="Brown A.J."/>
            <person name="Brown J.Y."/>
            <person name="Burford D."/>
            <person name="Burrill W."/>
            <person name="Burton J."/>
            <person name="Carder C."/>
            <person name="Carter N.P."/>
            <person name="Chapman J.C."/>
            <person name="Chen Y."/>
            <person name="Clarke G."/>
            <person name="Clark S.Y."/>
            <person name="Clee C.M."/>
            <person name="Clegg S."/>
            <person name="Collier R.E."/>
            <person name="Corby N."/>
            <person name="Crosier M."/>
            <person name="Cummings A.T."/>
            <person name="Davies J."/>
            <person name="Dhami P."/>
            <person name="Dunn M."/>
            <person name="Dutta I."/>
            <person name="Dyer L.W."/>
            <person name="Earthrowl M.E."/>
            <person name="Faulkner L."/>
            <person name="Fleming C.J."/>
            <person name="Frankish A."/>
            <person name="Frankland J.A."/>
            <person name="French L."/>
            <person name="Fricker D.G."/>
            <person name="Garner P."/>
            <person name="Garnett J."/>
            <person name="Ghori J."/>
            <person name="Gilbert J.G.R."/>
            <person name="Glison C."/>
            <person name="Grafham D.V."/>
            <person name="Gribble S."/>
            <person name="Griffiths C."/>
            <person name="Griffiths-Jones S."/>
            <person name="Grocock R."/>
            <person name="Guy J."/>
            <person name="Hall R.E."/>
            <person name="Hammond S."/>
            <person name="Harley J.L."/>
            <person name="Harrison E.S.I."/>
            <person name="Hart E.A."/>
            <person name="Heath P.D."/>
            <person name="Henderson C.D."/>
            <person name="Hopkins B.L."/>
            <person name="Howard P.J."/>
            <person name="Howden P.J."/>
            <person name="Huckle E."/>
            <person name="Johnson C."/>
            <person name="Johnson D."/>
            <person name="Joy A.A."/>
            <person name="Kay M."/>
            <person name="Keenan S."/>
            <person name="Kershaw J.K."/>
            <person name="Kimberley A.M."/>
            <person name="King A."/>
            <person name="Knights A."/>
            <person name="Laird G.K."/>
            <person name="Langford C."/>
            <person name="Lawlor S."/>
            <person name="Leongamornlert D.A."/>
            <person name="Leversha M."/>
            <person name="Lloyd C."/>
            <person name="Lloyd D.M."/>
            <person name="Lovell J."/>
            <person name="Martin S."/>
            <person name="Mashreghi-Mohammadi M."/>
            <person name="Matthews L."/>
            <person name="McLaren S."/>
            <person name="McLay K.E."/>
            <person name="McMurray A."/>
            <person name="Milne S."/>
            <person name="Nickerson T."/>
            <person name="Nisbett J."/>
            <person name="Nordsiek G."/>
            <person name="Pearce A.V."/>
            <person name="Peck A.I."/>
            <person name="Porter K.M."/>
            <person name="Pandian R."/>
            <person name="Pelan S."/>
            <person name="Phillimore B."/>
            <person name="Povey S."/>
            <person name="Ramsey Y."/>
            <person name="Rand V."/>
            <person name="Scharfe M."/>
            <person name="Sehra H.K."/>
            <person name="Shownkeen R."/>
            <person name="Sims S.K."/>
            <person name="Skuce C.D."/>
            <person name="Smith M."/>
            <person name="Steward C.A."/>
            <person name="Swarbreck D."/>
            <person name="Sycamore N."/>
            <person name="Tester J."/>
            <person name="Thorpe A."/>
            <person name="Tracey A."/>
            <person name="Tromans A."/>
            <person name="Thomas D.W."/>
            <person name="Wall M."/>
            <person name="Wallis J.M."/>
            <person name="West A.P."/>
            <person name="Whitehead S.L."/>
            <person name="Willey D.L."/>
            <person name="Williams S.A."/>
            <person name="Wilming L."/>
            <person name="Wray P.W."/>
            <person name="Young L."/>
            <person name="Ashurst J.L."/>
            <person name="Coulson A."/>
            <person name="Blocker H."/>
            <person name="Durbin R.M."/>
            <person name="Sulston J.E."/>
            <person name="Hubbard T."/>
            <person name="Jackson M.J."/>
            <person name="Bentley D.R."/>
            <person name="Beck S."/>
            <person name="Rogers J."/>
            <person name="Dunham I."/>
        </authorList>
    </citation>
    <scope>NUCLEOTIDE SEQUENCE [LARGE SCALE GENOMIC DNA]</scope>
</reference>
<reference key="2">
    <citation type="journal article" date="2004" name="Genome Res.">
        <title>The status, quality, and expansion of the NIH full-length cDNA project: the Mammalian Gene Collection (MGC).</title>
        <authorList>
            <consortium name="The MGC Project Team"/>
        </authorList>
    </citation>
    <scope>NUCLEOTIDE SEQUENCE [LARGE SCALE MRNA]</scope>
</reference>
<proteinExistence type="evidence at protein level"/>
<keyword id="KW-0238">DNA-binding</keyword>
<keyword id="KW-0539">Nucleus</keyword>
<keyword id="KW-1185">Reference proteome</keyword>
<keyword id="KW-0804">Transcription</keyword>
<keyword id="KW-0805">Transcription regulation</keyword>
<protein>
    <recommendedName>
        <fullName>Forkhead box protein D4-like 6</fullName>
        <shortName>FOXD4-like 6</shortName>
    </recommendedName>
</protein>
<name>FX4L6_HUMAN</name>
<organism>
    <name type="scientific">Homo sapiens</name>
    <name type="common">Human</name>
    <dbReference type="NCBI Taxonomy" id="9606"/>
    <lineage>
        <taxon>Eukaryota</taxon>
        <taxon>Metazoa</taxon>
        <taxon>Chordata</taxon>
        <taxon>Craniata</taxon>
        <taxon>Vertebrata</taxon>
        <taxon>Euteleostomi</taxon>
        <taxon>Mammalia</taxon>
        <taxon>Eutheria</taxon>
        <taxon>Euarchontoglires</taxon>
        <taxon>Primates</taxon>
        <taxon>Haplorrhini</taxon>
        <taxon>Catarrhini</taxon>
        <taxon>Hominidae</taxon>
        <taxon>Homo</taxon>
    </lineage>
</organism>
<sequence length="417" mass="45787">MNLPRAERLRSTPQRSLRDSDGEDGKIDVLGEEEDEDEVEDEEEAASQQFLEQSLQPGLQVARWGGVALPREHIEGGGGPSDPSEFGTKFRAPPRSAAASEDARQPAKPPYSYIALITMAILQNPHKRLTLSGICAFISGRFPYYRRKFPAWQNSIRHNLSLNDCFVKIPREPGHPGKGNYWSLDPASQDMFDNGSFLRRRKRFKRHQLTPGAHLPHPFPLPAAHAALHNPHPGPLLGAPAPPQPVPGAYPNTAPGRRPYALLHPHPLRYLLLSAPVYAGAPKKAEGAALATPAPFPCCSPHLVLSLGRRARVWRRHREADASLSALRVLCKGSGERVQGLRRVCPRPRGATATCSSDHQACCIPRPLPLCCKCPPPPLLGQFCSNSSSIRRRTAPTAALPPRARCWAGTCRPRRPC</sequence>